<reference key="1">
    <citation type="journal article" date="2010" name="PLoS ONE">
        <title>Genome sequence of Cronobacter sakazakii BAA-894 and comparative genomic hybridization analysis with other Cronobacter species.</title>
        <authorList>
            <person name="Kucerova E."/>
            <person name="Clifton S.W."/>
            <person name="Xia X.Q."/>
            <person name="Long F."/>
            <person name="Porwollik S."/>
            <person name="Fulton L."/>
            <person name="Fronick C."/>
            <person name="Minx P."/>
            <person name="Kyung K."/>
            <person name="Warren W."/>
            <person name="Fulton R."/>
            <person name="Feng D."/>
            <person name="Wollam A."/>
            <person name="Shah N."/>
            <person name="Bhonagiri V."/>
            <person name="Nash W.E."/>
            <person name="Hallsworth-Pepin K."/>
            <person name="Wilson R.K."/>
            <person name="McClelland M."/>
            <person name="Forsythe S.J."/>
        </authorList>
    </citation>
    <scope>NUCLEOTIDE SEQUENCE [LARGE SCALE GENOMIC DNA]</scope>
    <source>
        <strain>ATCC BAA-894</strain>
    </source>
</reference>
<dbReference type="EMBL" id="CP000783">
    <property type="protein sequence ID" value="ABU76110.1"/>
    <property type="molecule type" value="Genomic_DNA"/>
</dbReference>
<dbReference type="RefSeq" id="WP_012124101.1">
    <property type="nucleotide sequence ID" value="NC_009778.1"/>
</dbReference>
<dbReference type="SMR" id="A7MKW3"/>
<dbReference type="KEGG" id="esa:ESA_00833"/>
<dbReference type="PATRIC" id="fig|290339.8.peg.742"/>
<dbReference type="HOGENOM" id="CLU_030174_1_0_6"/>
<dbReference type="Proteomes" id="UP000000260">
    <property type="component" value="Chromosome"/>
</dbReference>
<dbReference type="GO" id="GO:0032153">
    <property type="term" value="C:cell division site"/>
    <property type="evidence" value="ECO:0007669"/>
    <property type="project" value="UniProtKB-UniRule"/>
</dbReference>
<dbReference type="GO" id="GO:0005886">
    <property type="term" value="C:plasma membrane"/>
    <property type="evidence" value="ECO:0007669"/>
    <property type="project" value="UniProtKB-SubCell"/>
</dbReference>
<dbReference type="GO" id="GO:0000917">
    <property type="term" value="P:division septum assembly"/>
    <property type="evidence" value="ECO:0007669"/>
    <property type="project" value="TreeGrafter"/>
</dbReference>
<dbReference type="GO" id="GO:0043093">
    <property type="term" value="P:FtsZ-dependent cytokinesis"/>
    <property type="evidence" value="ECO:0007669"/>
    <property type="project" value="UniProtKB-UniRule"/>
</dbReference>
<dbReference type="CDD" id="cd00231">
    <property type="entry name" value="ZipA"/>
    <property type="match status" value="1"/>
</dbReference>
<dbReference type="FunFam" id="3.30.1400.10:FF:000001">
    <property type="entry name" value="Cell division protein ZipA"/>
    <property type="match status" value="1"/>
</dbReference>
<dbReference type="Gene3D" id="3.30.1400.10">
    <property type="entry name" value="ZipA, C-terminal FtsZ-binding domain"/>
    <property type="match status" value="1"/>
</dbReference>
<dbReference type="HAMAP" id="MF_00509">
    <property type="entry name" value="ZipA"/>
    <property type="match status" value="1"/>
</dbReference>
<dbReference type="InterPro" id="IPR011919">
    <property type="entry name" value="Cell_div_ZipA"/>
</dbReference>
<dbReference type="InterPro" id="IPR007449">
    <property type="entry name" value="ZipA_FtsZ-bd_C"/>
</dbReference>
<dbReference type="InterPro" id="IPR036765">
    <property type="entry name" value="ZipA_FtsZ-bd_C_sf"/>
</dbReference>
<dbReference type="NCBIfam" id="TIGR02205">
    <property type="entry name" value="septum_zipA"/>
    <property type="match status" value="1"/>
</dbReference>
<dbReference type="PANTHER" id="PTHR38685">
    <property type="entry name" value="CELL DIVISION PROTEIN ZIPA"/>
    <property type="match status" value="1"/>
</dbReference>
<dbReference type="PANTHER" id="PTHR38685:SF1">
    <property type="entry name" value="CELL DIVISION PROTEIN ZIPA"/>
    <property type="match status" value="1"/>
</dbReference>
<dbReference type="Pfam" id="PF04354">
    <property type="entry name" value="ZipA_C"/>
    <property type="match status" value="1"/>
</dbReference>
<dbReference type="SMART" id="SM00771">
    <property type="entry name" value="ZipA_C"/>
    <property type="match status" value="1"/>
</dbReference>
<dbReference type="SUPFAM" id="SSF64383">
    <property type="entry name" value="Cell-division protein ZipA, C-terminal domain"/>
    <property type="match status" value="1"/>
</dbReference>
<protein>
    <recommendedName>
        <fullName evidence="1">Cell division protein ZipA</fullName>
    </recommendedName>
</protein>
<organism>
    <name type="scientific">Cronobacter sakazakii (strain ATCC BAA-894)</name>
    <name type="common">Enterobacter sakazakii</name>
    <dbReference type="NCBI Taxonomy" id="290339"/>
    <lineage>
        <taxon>Bacteria</taxon>
        <taxon>Pseudomonadati</taxon>
        <taxon>Pseudomonadota</taxon>
        <taxon>Gammaproteobacteria</taxon>
        <taxon>Enterobacterales</taxon>
        <taxon>Enterobacteriaceae</taxon>
        <taxon>Cronobacter</taxon>
    </lineage>
</organism>
<accession>A7MKW3</accession>
<proteinExistence type="inferred from homology"/>
<comment type="function">
    <text evidence="1">Essential cell division protein that stabilizes the FtsZ protofilaments by cross-linking them and that serves as a cytoplasmic membrane anchor for the Z ring. Also required for the recruitment to the septal ring of downstream cell division proteins.</text>
</comment>
<comment type="subunit">
    <text evidence="1">Interacts with FtsZ via their C-terminal domains.</text>
</comment>
<comment type="subcellular location">
    <subcellularLocation>
        <location evidence="1">Cell inner membrane</location>
        <topology evidence="1">Single-pass type I membrane protein</topology>
    </subcellularLocation>
    <text evidence="1">Localizes to the Z ring in an FtsZ-dependent manner.</text>
</comment>
<comment type="similarity">
    <text evidence="1">Belongs to the ZipA family.</text>
</comment>
<evidence type="ECO:0000255" key="1">
    <source>
        <dbReference type="HAMAP-Rule" id="MF_00509"/>
    </source>
</evidence>
<evidence type="ECO:0000256" key="2">
    <source>
        <dbReference type="SAM" id="MobiDB-lite"/>
    </source>
</evidence>
<sequence length="319" mass="35463">MMQDLRLILIIVGAIAIIALLVHGLWTSRKERSSMFRDRPMKRMKSKRDEDEDEDDVDEPDDDGVGEVRVRRSAPAPESAPARQPQHNYQPPYAPSQPRQPVREPVEPEPEVAYREAPQAPLHQPQEPQPVRQTAPQPSQPAPAQPAMRQPAPQPVTEPAPQPEPVAEPVPVSAPEKPQPKETVIIMNVAAHAGSQLNGDVLFNSIQQAGFKFGDMNIFHRHLSPDGSGPVLFSLANMVKPGSFDPESMTDFTTPGITIFMQVPGFGDELQNFKLMLQSAQHIADEVGGVVLDDQRRMMTPQKLREYQDRIRDVKEANG</sequence>
<name>ZIPA_CROS8</name>
<feature type="chain" id="PRO_1000015141" description="Cell division protein ZipA">
    <location>
        <begin position="1"/>
        <end position="319"/>
    </location>
</feature>
<feature type="topological domain" description="Periplasmic" evidence="1">
    <location>
        <begin position="1"/>
        <end position="6"/>
    </location>
</feature>
<feature type="transmembrane region" description="Helical" evidence="1">
    <location>
        <begin position="7"/>
        <end position="27"/>
    </location>
</feature>
<feature type="topological domain" description="Cytoplasmic" evidence="1">
    <location>
        <begin position="28"/>
        <end position="319"/>
    </location>
</feature>
<feature type="region of interest" description="Disordered" evidence="2">
    <location>
        <begin position="37"/>
        <end position="177"/>
    </location>
</feature>
<feature type="compositionally biased region" description="Acidic residues" evidence="2">
    <location>
        <begin position="50"/>
        <end position="65"/>
    </location>
</feature>
<feature type="compositionally biased region" description="Low complexity" evidence="2">
    <location>
        <begin position="73"/>
        <end position="86"/>
    </location>
</feature>
<feature type="compositionally biased region" description="Pro residues" evidence="2">
    <location>
        <begin position="152"/>
        <end position="168"/>
    </location>
</feature>
<gene>
    <name evidence="1" type="primary">zipA</name>
    <name type="ordered locus">ESA_00833</name>
</gene>
<keyword id="KW-0131">Cell cycle</keyword>
<keyword id="KW-0132">Cell division</keyword>
<keyword id="KW-0997">Cell inner membrane</keyword>
<keyword id="KW-1003">Cell membrane</keyword>
<keyword id="KW-0472">Membrane</keyword>
<keyword id="KW-1185">Reference proteome</keyword>
<keyword id="KW-0812">Transmembrane</keyword>
<keyword id="KW-1133">Transmembrane helix</keyword>